<protein>
    <recommendedName>
        <fullName evidence="1">Pyridoxine 5'-phosphate synthase</fullName>
        <shortName evidence="1">PNP synthase</shortName>
        <ecNumber evidence="1">2.6.99.2</ecNumber>
    </recommendedName>
</protein>
<dbReference type="EC" id="2.6.99.2" evidence="1"/>
<dbReference type="EMBL" id="CP000264">
    <property type="protein sequence ID" value="ABD53433.1"/>
    <property type="molecule type" value="Genomic_DNA"/>
</dbReference>
<dbReference type="RefSeq" id="WP_011453642.1">
    <property type="nucleotide sequence ID" value="NC_007802.1"/>
</dbReference>
<dbReference type="SMR" id="Q28V29"/>
<dbReference type="STRING" id="290400.Jann_0516"/>
<dbReference type="KEGG" id="jan:Jann_0516"/>
<dbReference type="eggNOG" id="COG0854">
    <property type="taxonomic scope" value="Bacteria"/>
</dbReference>
<dbReference type="HOGENOM" id="CLU_074563_0_0_5"/>
<dbReference type="OrthoDB" id="9806590at2"/>
<dbReference type="UniPathway" id="UPA00244">
    <property type="reaction ID" value="UER00313"/>
</dbReference>
<dbReference type="Proteomes" id="UP000008326">
    <property type="component" value="Chromosome"/>
</dbReference>
<dbReference type="GO" id="GO:0005829">
    <property type="term" value="C:cytosol"/>
    <property type="evidence" value="ECO:0007669"/>
    <property type="project" value="TreeGrafter"/>
</dbReference>
<dbReference type="GO" id="GO:0033856">
    <property type="term" value="F:pyridoxine 5'-phosphate synthase activity"/>
    <property type="evidence" value="ECO:0007669"/>
    <property type="project" value="UniProtKB-EC"/>
</dbReference>
<dbReference type="GO" id="GO:0008615">
    <property type="term" value="P:pyridoxine biosynthetic process"/>
    <property type="evidence" value="ECO:0007669"/>
    <property type="project" value="UniProtKB-UniRule"/>
</dbReference>
<dbReference type="CDD" id="cd00003">
    <property type="entry name" value="PNPsynthase"/>
    <property type="match status" value="1"/>
</dbReference>
<dbReference type="Gene3D" id="3.20.20.70">
    <property type="entry name" value="Aldolase class I"/>
    <property type="match status" value="1"/>
</dbReference>
<dbReference type="HAMAP" id="MF_00279">
    <property type="entry name" value="PdxJ"/>
    <property type="match status" value="1"/>
</dbReference>
<dbReference type="InterPro" id="IPR013785">
    <property type="entry name" value="Aldolase_TIM"/>
</dbReference>
<dbReference type="InterPro" id="IPR004569">
    <property type="entry name" value="PyrdxlP_synth_PdxJ"/>
</dbReference>
<dbReference type="InterPro" id="IPR036130">
    <property type="entry name" value="Pyridoxine-5'_phos_synth"/>
</dbReference>
<dbReference type="NCBIfam" id="TIGR00559">
    <property type="entry name" value="pdxJ"/>
    <property type="match status" value="1"/>
</dbReference>
<dbReference type="NCBIfam" id="NF003624">
    <property type="entry name" value="PRK05265.1-2"/>
    <property type="match status" value="1"/>
</dbReference>
<dbReference type="NCBIfam" id="NF003625">
    <property type="entry name" value="PRK05265.1-3"/>
    <property type="match status" value="1"/>
</dbReference>
<dbReference type="NCBIfam" id="NF003627">
    <property type="entry name" value="PRK05265.1-5"/>
    <property type="match status" value="1"/>
</dbReference>
<dbReference type="PANTHER" id="PTHR30456">
    <property type="entry name" value="PYRIDOXINE 5'-PHOSPHATE SYNTHASE"/>
    <property type="match status" value="1"/>
</dbReference>
<dbReference type="PANTHER" id="PTHR30456:SF0">
    <property type="entry name" value="PYRIDOXINE 5'-PHOSPHATE SYNTHASE"/>
    <property type="match status" value="1"/>
</dbReference>
<dbReference type="Pfam" id="PF03740">
    <property type="entry name" value="PdxJ"/>
    <property type="match status" value="1"/>
</dbReference>
<dbReference type="SUPFAM" id="SSF63892">
    <property type="entry name" value="Pyridoxine 5'-phosphate synthase"/>
    <property type="match status" value="1"/>
</dbReference>
<gene>
    <name evidence="1" type="primary">pdxJ</name>
    <name type="ordered locus">Jann_0516</name>
</gene>
<feature type="chain" id="PRO_1000022376" description="Pyridoxine 5'-phosphate synthase">
    <location>
        <begin position="1"/>
        <end position="248"/>
    </location>
</feature>
<feature type="active site" description="Proton acceptor" evidence="1">
    <location>
        <position position="48"/>
    </location>
</feature>
<feature type="active site" description="Proton acceptor" evidence="1">
    <location>
        <position position="75"/>
    </location>
</feature>
<feature type="active site" description="Proton donor" evidence="1">
    <location>
        <position position="199"/>
    </location>
</feature>
<feature type="binding site" evidence="1">
    <location>
        <position position="12"/>
    </location>
    <ligand>
        <name>3-amino-2-oxopropyl phosphate</name>
        <dbReference type="ChEBI" id="CHEBI:57279"/>
    </ligand>
</feature>
<feature type="binding site" evidence="1">
    <location>
        <begin position="14"/>
        <end position="15"/>
    </location>
    <ligand>
        <name>1-deoxy-D-xylulose 5-phosphate</name>
        <dbReference type="ChEBI" id="CHEBI:57792"/>
    </ligand>
</feature>
<feature type="binding site" evidence="1">
    <location>
        <position position="23"/>
    </location>
    <ligand>
        <name>3-amino-2-oxopropyl phosphate</name>
        <dbReference type="ChEBI" id="CHEBI:57279"/>
    </ligand>
</feature>
<feature type="binding site" evidence="1">
    <location>
        <position position="50"/>
    </location>
    <ligand>
        <name>1-deoxy-D-xylulose 5-phosphate</name>
        <dbReference type="ChEBI" id="CHEBI:57792"/>
    </ligand>
</feature>
<feature type="binding site" evidence="1">
    <location>
        <position position="55"/>
    </location>
    <ligand>
        <name>1-deoxy-D-xylulose 5-phosphate</name>
        <dbReference type="ChEBI" id="CHEBI:57792"/>
    </ligand>
</feature>
<feature type="binding site" evidence="1">
    <location>
        <position position="105"/>
    </location>
    <ligand>
        <name>1-deoxy-D-xylulose 5-phosphate</name>
        <dbReference type="ChEBI" id="CHEBI:57792"/>
    </ligand>
</feature>
<feature type="binding site" evidence="1">
    <location>
        <position position="200"/>
    </location>
    <ligand>
        <name>3-amino-2-oxopropyl phosphate</name>
        <dbReference type="ChEBI" id="CHEBI:57279"/>
    </ligand>
</feature>
<feature type="binding site" evidence="1">
    <location>
        <begin position="221"/>
        <end position="222"/>
    </location>
    <ligand>
        <name>3-amino-2-oxopropyl phosphate</name>
        <dbReference type="ChEBI" id="CHEBI:57279"/>
    </ligand>
</feature>
<feature type="site" description="Transition state stabilizer" evidence="1">
    <location>
        <position position="156"/>
    </location>
</feature>
<accession>Q28V29</accession>
<name>PDXJ_JANSC</name>
<reference key="1">
    <citation type="submission" date="2006-02" db="EMBL/GenBank/DDBJ databases">
        <title>Complete sequence of chromosome of Jannaschia sp. CCS1.</title>
        <authorList>
            <consortium name="US DOE Joint Genome Institute"/>
            <person name="Copeland A."/>
            <person name="Lucas S."/>
            <person name="Lapidus A."/>
            <person name="Barry K."/>
            <person name="Detter J.C."/>
            <person name="Glavina del Rio T."/>
            <person name="Hammon N."/>
            <person name="Israni S."/>
            <person name="Pitluck S."/>
            <person name="Brettin T."/>
            <person name="Bruce D."/>
            <person name="Han C."/>
            <person name="Tapia R."/>
            <person name="Gilna P."/>
            <person name="Chertkov O."/>
            <person name="Saunders E."/>
            <person name="Schmutz J."/>
            <person name="Larimer F."/>
            <person name="Land M."/>
            <person name="Kyrpides N."/>
            <person name="Lykidis A."/>
            <person name="Moran M.A."/>
            <person name="Belas R."/>
            <person name="Ye W."/>
            <person name="Buchan A."/>
            <person name="Gonzalez J.M."/>
            <person name="Schell M.A."/>
            <person name="Richardson P."/>
        </authorList>
    </citation>
    <scope>NUCLEOTIDE SEQUENCE [LARGE SCALE GENOMIC DNA]</scope>
    <source>
        <strain>CCS1</strain>
    </source>
</reference>
<proteinExistence type="inferred from homology"/>
<keyword id="KW-0963">Cytoplasm</keyword>
<keyword id="KW-0664">Pyridoxine biosynthesis</keyword>
<keyword id="KW-1185">Reference proteome</keyword>
<keyword id="KW-0808">Transferase</keyword>
<comment type="function">
    <text evidence="1">Catalyzes the complicated ring closure reaction between the two acyclic compounds 1-deoxy-D-xylulose-5-phosphate (DXP) and 3-amino-2-oxopropyl phosphate (1-amino-acetone-3-phosphate or AAP) to form pyridoxine 5'-phosphate (PNP) and inorganic phosphate.</text>
</comment>
<comment type="catalytic activity">
    <reaction evidence="1">
        <text>3-amino-2-oxopropyl phosphate + 1-deoxy-D-xylulose 5-phosphate = pyridoxine 5'-phosphate + phosphate + 2 H2O + H(+)</text>
        <dbReference type="Rhea" id="RHEA:15265"/>
        <dbReference type="ChEBI" id="CHEBI:15377"/>
        <dbReference type="ChEBI" id="CHEBI:15378"/>
        <dbReference type="ChEBI" id="CHEBI:43474"/>
        <dbReference type="ChEBI" id="CHEBI:57279"/>
        <dbReference type="ChEBI" id="CHEBI:57792"/>
        <dbReference type="ChEBI" id="CHEBI:58589"/>
        <dbReference type="EC" id="2.6.99.2"/>
    </reaction>
</comment>
<comment type="pathway">
    <text evidence="1">Cofactor biosynthesis; pyridoxine 5'-phosphate biosynthesis; pyridoxine 5'-phosphate from D-erythrose 4-phosphate: step 5/5.</text>
</comment>
<comment type="subunit">
    <text evidence="1">Homooctamer; tetramer of dimers.</text>
</comment>
<comment type="subcellular location">
    <subcellularLocation>
        <location evidence="1">Cytoplasm</location>
    </subcellularLocation>
</comment>
<comment type="similarity">
    <text evidence="1">Belongs to the PNP synthase family.</text>
</comment>
<sequence length="248" mass="26493">MSAMEKLRLGVNIDHVATLRNARGGALPDPVRAAVLAEQAGADGITAHLREDRRHIRDADIAAIMEAITIPLNFEMAATDEMQEIALGHLPHAACIVPERREERTTEGGLEVAGDDNRLAQYIAPLKDAGIRVSLFIAAERSQIEAAARIGAPVIELHTGAYCDYDAEGDVAARDAELARLIAGAKLGVELGLEVHMGHGLNYDTVAPIAALPEVAELNIGHFLIGESIFVGLEAAMTEMRARMDAAR</sequence>
<evidence type="ECO:0000255" key="1">
    <source>
        <dbReference type="HAMAP-Rule" id="MF_00279"/>
    </source>
</evidence>
<organism>
    <name type="scientific">Jannaschia sp. (strain CCS1)</name>
    <dbReference type="NCBI Taxonomy" id="290400"/>
    <lineage>
        <taxon>Bacteria</taxon>
        <taxon>Pseudomonadati</taxon>
        <taxon>Pseudomonadota</taxon>
        <taxon>Alphaproteobacteria</taxon>
        <taxon>Rhodobacterales</taxon>
        <taxon>Roseobacteraceae</taxon>
        <taxon>Jannaschia</taxon>
    </lineage>
</organism>